<protein>
    <recommendedName>
        <fullName evidence="1">Foldase protein PrsA</fullName>
        <ecNumber evidence="1">5.2.1.8</ecNumber>
    </recommendedName>
</protein>
<keyword id="KW-1003">Cell membrane</keyword>
<keyword id="KW-0413">Isomerase</keyword>
<keyword id="KW-0449">Lipoprotein</keyword>
<keyword id="KW-0472">Membrane</keyword>
<keyword id="KW-0564">Palmitate</keyword>
<keyword id="KW-0697">Rotamase</keyword>
<keyword id="KW-0732">Signal</keyword>
<dbReference type="EC" id="5.2.1.8" evidence="1"/>
<dbReference type="EMBL" id="CP000920">
    <property type="protein sequence ID" value="ACO21134.1"/>
    <property type="molecule type" value="Genomic_DNA"/>
</dbReference>
<dbReference type="RefSeq" id="WP_000727933.1">
    <property type="nucleotide sequence ID" value="NC_012467.1"/>
</dbReference>
<dbReference type="SMR" id="C1CK62"/>
<dbReference type="GeneID" id="45653677"/>
<dbReference type="KEGG" id="spp:SPP_0987"/>
<dbReference type="HOGENOM" id="CLU_034646_6_0_9"/>
<dbReference type="GO" id="GO:0005886">
    <property type="term" value="C:plasma membrane"/>
    <property type="evidence" value="ECO:0007669"/>
    <property type="project" value="UniProtKB-SubCell"/>
</dbReference>
<dbReference type="GO" id="GO:0003755">
    <property type="term" value="F:peptidyl-prolyl cis-trans isomerase activity"/>
    <property type="evidence" value="ECO:0007669"/>
    <property type="project" value="UniProtKB-UniRule"/>
</dbReference>
<dbReference type="GO" id="GO:0006457">
    <property type="term" value="P:protein folding"/>
    <property type="evidence" value="ECO:0007669"/>
    <property type="project" value="UniProtKB-UniRule"/>
</dbReference>
<dbReference type="Gene3D" id="3.10.50.40">
    <property type="match status" value="1"/>
</dbReference>
<dbReference type="HAMAP" id="MF_01145">
    <property type="entry name" value="Foldase_PrsA"/>
    <property type="match status" value="1"/>
</dbReference>
<dbReference type="InterPro" id="IPR023059">
    <property type="entry name" value="Foldase_PrsA"/>
</dbReference>
<dbReference type="InterPro" id="IPR046357">
    <property type="entry name" value="PPIase_dom_sf"/>
</dbReference>
<dbReference type="InterPro" id="IPR000297">
    <property type="entry name" value="PPIase_PpiC"/>
</dbReference>
<dbReference type="InterPro" id="IPR050245">
    <property type="entry name" value="PrsA_foldase"/>
</dbReference>
<dbReference type="InterPro" id="IPR027304">
    <property type="entry name" value="Trigger_fact/SurA_dom_sf"/>
</dbReference>
<dbReference type="NCBIfam" id="NF002361">
    <property type="entry name" value="PRK01326.1"/>
    <property type="match status" value="1"/>
</dbReference>
<dbReference type="PANTHER" id="PTHR47245:SF1">
    <property type="entry name" value="FOLDASE PROTEIN PRSA"/>
    <property type="match status" value="1"/>
</dbReference>
<dbReference type="PANTHER" id="PTHR47245">
    <property type="entry name" value="PEPTIDYLPROLYL ISOMERASE"/>
    <property type="match status" value="1"/>
</dbReference>
<dbReference type="Pfam" id="PF00639">
    <property type="entry name" value="Rotamase"/>
    <property type="match status" value="1"/>
</dbReference>
<dbReference type="SUPFAM" id="SSF54534">
    <property type="entry name" value="FKBP-like"/>
    <property type="match status" value="1"/>
</dbReference>
<dbReference type="SUPFAM" id="SSF109998">
    <property type="entry name" value="Triger factor/SurA peptide-binding domain-like"/>
    <property type="match status" value="1"/>
</dbReference>
<dbReference type="PROSITE" id="PS50198">
    <property type="entry name" value="PPIC_PPIASE_2"/>
    <property type="match status" value="1"/>
</dbReference>
<dbReference type="PROSITE" id="PS51257">
    <property type="entry name" value="PROKAR_LIPOPROTEIN"/>
    <property type="match status" value="1"/>
</dbReference>
<sequence length="313" mass="34454">MKKKLLAGAITLLSVATLAACSKGSEGADLISMKGDIITEHQFYEQVKNNPSAQQVLLNMTIQKVFEKQYGSELDDKEVDDTIAEEKKQYGENYQRVLSQAGMTLETRKAQIRTSKLVELAVKKVAEAELTDEAYKKAFDEYTPDVTAQIIRLNNEDKAKEVLEKAKAEGADFAQLAKDNSTDEKTKENGGEITFDSASTEVPEQVKKAAFALDVDGVSDVITATGTQAYSSQYYIVKLTKKTEKSSNIDDYKEKLKTVILTQKQNDSTFVQSIIGKELQAANIKVKDQAFQNIFTQYIGGGDSSSSSSTSNE</sequence>
<organism>
    <name type="scientific">Streptococcus pneumoniae (strain P1031)</name>
    <dbReference type="NCBI Taxonomy" id="488223"/>
    <lineage>
        <taxon>Bacteria</taxon>
        <taxon>Bacillati</taxon>
        <taxon>Bacillota</taxon>
        <taxon>Bacilli</taxon>
        <taxon>Lactobacillales</taxon>
        <taxon>Streptococcaceae</taxon>
        <taxon>Streptococcus</taxon>
    </lineage>
</organism>
<proteinExistence type="inferred from homology"/>
<name>PRSA_STRZP</name>
<gene>
    <name evidence="1" type="primary">prsA</name>
    <name type="ordered locus">SPP_0987</name>
</gene>
<comment type="function">
    <text evidence="1">Plays a major role in protein secretion by helping the post-translocational extracellular folding of several secreted proteins.</text>
</comment>
<comment type="catalytic activity">
    <reaction evidence="1">
        <text>[protein]-peptidylproline (omega=180) = [protein]-peptidylproline (omega=0)</text>
        <dbReference type="Rhea" id="RHEA:16237"/>
        <dbReference type="Rhea" id="RHEA-COMP:10747"/>
        <dbReference type="Rhea" id="RHEA-COMP:10748"/>
        <dbReference type="ChEBI" id="CHEBI:83833"/>
        <dbReference type="ChEBI" id="CHEBI:83834"/>
        <dbReference type="EC" id="5.2.1.8"/>
    </reaction>
</comment>
<comment type="subcellular location">
    <subcellularLocation>
        <location evidence="1">Cell membrane</location>
        <topology evidence="1">Lipid-anchor</topology>
    </subcellularLocation>
</comment>
<comment type="similarity">
    <text evidence="1">Belongs to the PrsA family.</text>
</comment>
<accession>C1CK62</accession>
<reference key="1">
    <citation type="journal article" date="2010" name="Genome Biol.">
        <title>Structure and dynamics of the pan-genome of Streptococcus pneumoniae and closely related species.</title>
        <authorList>
            <person name="Donati C."/>
            <person name="Hiller N.L."/>
            <person name="Tettelin H."/>
            <person name="Muzzi A."/>
            <person name="Croucher N.J."/>
            <person name="Angiuoli S.V."/>
            <person name="Oggioni M."/>
            <person name="Dunning Hotopp J.C."/>
            <person name="Hu F.Z."/>
            <person name="Riley D.R."/>
            <person name="Covacci A."/>
            <person name="Mitchell T.J."/>
            <person name="Bentley S.D."/>
            <person name="Kilian M."/>
            <person name="Ehrlich G.D."/>
            <person name="Rappuoli R."/>
            <person name="Moxon E.R."/>
            <person name="Masignani V."/>
        </authorList>
    </citation>
    <scope>NUCLEOTIDE SEQUENCE [LARGE SCALE GENOMIC DNA]</scope>
    <source>
        <strain>P1031</strain>
    </source>
</reference>
<feature type="signal peptide" evidence="1">
    <location>
        <begin position="1"/>
        <end position="20"/>
    </location>
</feature>
<feature type="chain" id="PRO_1000164118" description="Foldase protein PrsA">
    <location>
        <begin position="21"/>
        <end position="313"/>
    </location>
</feature>
<feature type="domain" description="PpiC" evidence="1">
    <location>
        <begin position="143"/>
        <end position="241"/>
    </location>
</feature>
<feature type="lipid moiety-binding region" description="N-palmitoyl cysteine" evidence="1">
    <location>
        <position position="21"/>
    </location>
</feature>
<feature type="lipid moiety-binding region" description="S-diacylglycerol cysteine" evidence="1">
    <location>
        <position position="21"/>
    </location>
</feature>
<evidence type="ECO:0000255" key="1">
    <source>
        <dbReference type="HAMAP-Rule" id="MF_01145"/>
    </source>
</evidence>